<name>DHB14_RAT</name>
<dbReference type="EC" id="1.1.1.122" evidence="2"/>
<dbReference type="EMBL" id="AABR07003258">
    <property type="status" value="NOT_ANNOTATED_CDS"/>
    <property type="molecule type" value="Genomic_DNA"/>
</dbReference>
<dbReference type="RefSeq" id="NP_001178040.1">
    <property type="nucleotide sequence ID" value="NM_001191111.2"/>
</dbReference>
<dbReference type="SMR" id="A0A8I6GJ95"/>
<dbReference type="FunCoup" id="A0A8I6GJ95">
    <property type="interactions" value="8"/>
</dbReference>
<dbReference type="Ensembl" id="ENSRNOT00000103712.1">
    <property type="protein sequence ID" value="ENSRNOP00000090949.1"/>
    <property type="gene ID" value="ENSRNOG00000020949.7"/>
</dbReference>
<dbReference type="Ensembl" id="ENSRNOT00055009518">
    <property type="protein sequence ID" value="ENSRNOP00055007331"/>
    <property type="gene ID" value="ENSRNOG00055005886"/>
</dbReference>
<dbReference type="Ensembl" id="ENSRNOT00060017542">
    <property type="protein sequence ID" value="ENSRNOP00060013629"/>
    <property type="gene ID" value="ENSRNOG00060010369"/>
</dbReference>
<dbReference type="Ensembl" id="ENSRNOT00065052732">
    <property type="protein sequence ID" value="ENSRNOP00065043337"/>
    <property type="gene ID" value="ENSRNOG00065030597"/>
</dbReference>
<dbReference type="GeneID" id="691018"/>
<dbReference type="KEGG" id="rno:691018"/>
<dbReference type="AGR" id="RGD:1588673"/>
<dbReference type="CTD" id="51171"/>
<dbReference type="RGD" id="1588673">
    <property type="gene designation" value="Hsd17b14"/>
</dbReference>
<dbReference type="GeneTree" id="ENSGT00940000161346"/>
<dbReference type="OMA" id="AAYQMSQ"/>
<dbReference type="Proteomes" id="UP000002494">
    <property type="component" value="Chromosome 1"/>
</dbReference>
<dbReference type="GO" id="GO:0005829">
    <property type="term" value="C:cytosol"/>
    <property type="evidence" value="ECO:0000250"/>
    <property type="project" value="UniProtKB"/>
</dbReference>
<dbReference type="GO" id="GO:0047834">
    <property type="term" value="F:D-threo-aldose 1-dehydrogenase activity"/>
    <property type="evidence" value="ECO:0000314"/>
    <property type="project" value="UniProtKB"/>
</dbReference>
<dbReference type="GO" id="GO:0004303">
    <property type="term" value="F:estradiol 17-beta-dehydrogenase [NAD(P)+] activity"/>
    <property type="evidence" value="ECO:0000318"/>
    <property type="project" value="GO_Central"/>
</dbReference>
<dbReference type="GO" id="GO:0042802">
    <property type="term" value="F:identical protein binding"/>
    <property type="evidence" value="ECO:0000266"/>
    <property type="project" value="RGD"/>
</dbReference>
<dbReference type="GO" id="GO:0042355">
    <property type="term" value="P:L-fucose catabolic process"/>
    <property type="evidence" value="ECO:0000250"/>
    <property type="project" value="UniProtKB"/>
</dbReference>
<dbReference type="GO" id="GO:0006706">
    <property type="term" value="P:steroid catabolic process"/>
    <property type="evidence" value="ECO:0000318"/>
    <property type="project" value="GO_Central"/>
</dbReference>
<dbReference type="FunFam" id="3.40.50.720:FF:000600">
    <property type="entry name" value="17-beta-hydroxysteroid dehydrogenase 14"/>
    <property type="match status" value="1"/>
</dbReference>
<dbReference type="Gene3D" id="3.40.50.720">
    <property type="entry name" value="NAD(P)-binding Rossmann-like Domain"/>
    <property type="match status" value="1"/>
</dbReference>
<dbReference type="InterPro" id="IPR036291">
    <property type="entry name" value="NAD(P)-bd_dom_sf"/>
</dbReference>
<dbReference type="InterPro" id="IPR020904">
    <property type="entry name" value="Sc_DH/Rdtase_CS"/>
</dbReference>
<dbReference type="InterPro" id="IPR002347">
    <property type="entry name" value="SDR_fam"/>
</dbReference>
<dbReference type="PANTHER" id="PTHR43658:SF8">
    <property type="entry name" value="17-BETA-HYDROXYSTEROID DEHYDROGENASE 14-RELATED"/>
    <property type="match status" value="1"/>
</dbReference>
<dbReference type="PANTHER" id="PTHR43658">
    <property type="entry name" value="SHORT-CHAIN DEHYDROGENASE/REDUCTASE"/>
    <property type="match status" value="1"/>
</dbReference>
<dbReference type="Pfam" id="PF13561">
    <property type="entry name" value="adh_short_C2"/>
    <property type="match status" value="1"/>
</dbReference>
<dbReference type="PRINTS" id="PR00081">
    <property type="entry name" value="GDHRDH"/>
</dbReference>
<dbReference type="PRINTS" id="PR00080">
    <property type="entry name" value="SDRFAMILY"/>
</dbReference>
<dbReference type="SUPFAM" id="SSF51735">
    <property type="entry name" value="NAD(P)-binding Rossmann-fold domains"/>
    <property type="match status" value="1"/>
</dbReference>
<dbReference type="PROSITE" id="PS00061">
    <property type="entry name" value="ADH_SHORT"/>
    <property type="match status" value="1"/>
</dbReference>
<accession>A0A8I6GJ95</accession>
<gene>
    <name type="primary">Hsd17b14</name>
</gene>
<sequence length="270" mass="28157">MAAVGRYSGKVVVVTGGSRGIGAAIVRAFVDSGAQVVFCDKDEAGGRAVEQELLGTVFIPGDVTQEGDLQTLISETVSRFGHLDCVVNNAGYHPPAQLPEETSAQGFRQLLEENLLGAYTLIKLALPHLRKSKGNIINISSLVGAIGQSQALTYVATKGAVTAMTKALALDESRYGVRVNCISPGNIWTPLWQELAAATSDPRATILEGTLAQPLGRMGQPAEVGAAAVFLASEATFCTGLELFMTGGAELGYGRKASSSTLVEVPILPP</sequence>
<protein>
    <recommendedName>
        <fullName>L-fucose dehydrogenase</fullName>
        <ecNumber evidence="2">1.1.1.122</ecNumber>
    </recommendedName>
    <alternativeName>
        <fullName>Hydroxysteroid 17-beta dehydrogenase 14</fullName>
    </alternativeName>
</protein>
<organism>
    <name type="scientific">Rattus norvegicus</name>
    <name type="common">Rat</name>
    <dbReference type="NCBI Taxonomy" id="10116"/>
    <lineage>
        <taxon>Eukaryota</taxon>
        <taxon>Metazoa</taxon>
        <taxon>Chordata</taxon>
        <taxon>Craniata</taxon>
        <taxon>Vertebrata</taxon>
        <taxon>Euteleostomi</taxon>
        <taxon>Mammalia</taxon>
        <taxon>Eutheria</taxon>
        <taxon>Euarchontoglires</taxon>
        <taxon>Glires</taxon>
        <taxon>Rodentia</taxon>
        <taxon>Myomorpha</taxon>
        <taxon>Muroidea</taxon>
        <taxon>Muridae</taxon>
        <taxon>Murinae</taxon>
        <taxon>Rattus</taxon>
    </lineage>
</organism>
<reference key="1">
    <citation type="journal article" date="2004" name="Nature">
        <title>Genome sequence of the Brown Norway rat yields insights into mammalian evolution.</title>
        <authorList>
            <person name="Gibbs R.A."/>
            <person name="Weinstock G.M."/>
            <person name="Metzker M.L."/>
            <person name="Muzny D.M."/>
            <person name="Sodergren E.J."/>
            <person name="Scherer S."/>
            <person name="Scott G."/>
            <person name="Steffen D."/>
            <person name="Worley K.C."/>
            <person name="Burch P.E."/>
            <person name="Okwuonu G."/>
            <person name="Hines S."/>
            <person name="Lewis L."/>
            <person name="Deramo C."/>
            <person name="Delgado O."/>
            <person name="Dugan-Rocha S."/>
            <person name="Miner G."/>
            <person name="Morgan M."/>
            <person name="Hawes A."/>
            <person name="Gill R."/>
            <person name="Holt R.A."/>
            <person name="Adams M.D."/>
            <person name="Amanatides P.G."/>
            <person name="Baden-Tillson H."/>
            <person name="Barnstead M."/>
            <person name="Chin S."/>
            <person name="Evans C.A."/>
            <person name="Ferriera S."/>
            <person name="Fosler C."/>
            <person name="Glodek A."/>
            <person name="Gu Z."/>
            <person name="Jennings D."/>
            <person name="Kraft C.L."/>
            <person name="Nguyen T."/>
            <person name="Pfannkoch C.M."/>
            <person name="Sitter C."/>
            <person name="Sutton G.G."/>
            <person name="Venter J.C."/>
            <person name="Woodage T."/>
            <person name="Smith D."/>
            <person name="Lee H.-M."/>
            <person name="Gustafson E."/>
            <person name="Cahill P."/>
            <person name="Kana A."/>
            <person name="Doucette-Stamm L."/>
            <person name="Weinstock K."/>
            <person name="Fechtel K."/>
            <person name="Weiss R.B."/>
            <person name="Dunn D.M."/>
            <person name="Green E.D."/>
            <person name="Blakesley R.W."/>
            <person name="Bouffard G.G."/>
            <person name="De Jong P.J."/>
            <person name="Osoegawa K."/>
            <person name="Zhu B."/>
            <person name="Marra M."/>
            <person name="Schein J."/>
            <person name="Bosdet I."/>
            <person name="Fjell C."/>
            <person name="Jones S."/>
            <person name="Krzywinski M."/>
            <person name="Mathewson C."/>
            <person name="Siddiqui A."/>
            <person name="Wye N."/>
            <person name="McPherson J."/>
            <person name="Zhao S."/>
            <person name="Fraser C.M."/>
            <person name="Shetty J."/>
            <person name="Shatsman S."/>
            <person name="Geer K."/>
            <person name="Chen Y."/>
            <person name="Abramzon S."/>
            <person name="Nierman W.C."/>
            <person name="Havlak P.H."/>
            <person name="Chen R."/>
            <person name="Durbin K.J."/>
            <person name="Egan A."/>
            <person name="Ren Y."/>
            <person name="Song X.-Z."/>
            <person name="Li B."/>
            <person name="Liu Y."/>
            <person name="Qin X."/>
            <person name="Cawley S."/>
            <person name="Cooney A.J."/>
            <person name="D'Souza L.M."/>
            <person name="Martin K."/>
            <person name="Wu J.Q."/>
            <person name="Gonzalez-Garay M.L."/>
            <person name="Jackson A.R."/>
            <person name="Kalafus K.J."/>
            <person name="McLeod M.P."/>
            <person name="Milosavljevic A."/>
            <person name="Virk D."/>
            <person name="Volkov A."/>
            <person name="Wheeler D.A."/>
            <person name="Zhang Z."/>
            <person name="Bailey J.A."/>
            <person name="Eichler E.E."/>
            <person name="Tuzun E."/>
            <person name="Birney E."/>
            <person name="Mongin E."/>
            <person name="Ureta-Vidal A."/>
            <person name="Woodwark C."/>
            <person name="Zdobnov E."/>
            <person name="Bork P."/>
            <person name="Suyama M."/>
            <person name="Torrents D."/>
            <person name="Alexandersson M."/>
            <person name="Trask B.J."/>
            <person name="Young J.M."/>
            <person name="Huang H."/>
            <person name="Wang H."/>
            <person name="Xing H."/>
            <person name="Daniels S."/>
            <person name="Gietzen D."/>
            <person name="Schmidt J."/>
            <person name="Stevens K."/>
            <person name="Vitt U."/>
            <person name="Wingrove J."/>
            <person name="Camara F."/>
            <person name="Mar Alba M."/>
            <person name="Abril J.F."/>
            <person name="Guigo R."/>
            <person name="Smit A."/>
            <person name="Dubchak I."/>
            <person name="Rubin E.M."/>
            <person name="Couronne O."/>
            <person name="Poliakov A."/>
            <person name="Huebner N."/>
            <person name="Ganten D."/>
            <person name="Goesele C."/>
            <person name="Hummel O."/>
            <person name="Kreitler T."/>
            <person name="Lee Y.-A."/>
            <person name="Monti J."/>
            <person name="Schulz H."/>
            <person name="Zimdahl H."/>
            <person name="Himmelbauer H."/>
            <person name="Lehrach H."/>
            <person name="Jacob H.J."/>
            <person name="Bromberg S."/>
            <person name="Gullings-Handley J."/>
            <person name="Jensen-Seaman M.I."/>
            <person name="Kwitek A.E."/>
            <person name="Lazar J."/>
            <person name="Pasko D."/>
            <person name="Tonellato P.J."/>
            <person name="Twigger S."/>
            <person name="Ponting C.P."/>
            <person name="Duarte J.M."/>
            <person name="Rice S."/>
            <person name="Goodstadt L."/>
            <person name="Beatson S.A."/>
            <person name="Emes R.D."/>
            <person name="Winter E.E."/>
            <person name="Webber C."/>
            <person name="Brandt P."/>
            <person name="Nyakatura G."/>
            <person name="Adetobi M."/>
            <person name="Chiaromonte F."/>
            <person name="Elnitski L."/>
            <person name="Eswara P."/>
            <person name="Hardison R.C."/>
            <person name="Hou M."/>
            <person name="Kolbe D."/>
            <person name="Makova K."/>
            <person name="Miller W."/>
            <person name="Nekrutenko A."/>
            <person name="Riemer C."/>
            <person name="Schwartz S."/>
            <person name="Taylor J."/>
            <person name="Yang S."/>
            <person name="Zhang Y."/>
            <person name="Lindpaintner K."/>
            <person name="Andrews T.D."/>
            <person name="Caccamo M."/>
            <person name="Clamp M."/>
            <person name="Clarke L."/>
            <person name="Curwen V."/>
            <person name="Durbin R.M."/>
            <person name="Eyras E."/>
            <person name="Searle S.M."/>
            <person name="Cooper G.M."/>
            <person name="Batzoglou S."/>
            <person name="Brudno M."/>
            <person name="Sidow A."/>
            <person name="Stone E.A."/>
            <person name="Payseur B.A."/>
            <person name="Bourque G."/>
            <person name="Lopez-Otin C."/>
            <person name="Puente X.S."/>
            <person name="Chakrabarti K."/>
            <person name="Chatterji S."/>
            <person name="Dewey C."/>
            <person name="Pachter L."/>
            <person name="Bray N."/>
            <person name="Yap V.B."/>
            <person name="Caspi A."/>
            <person name="Tesler G."/>
            <person name="Pevzner P.A."/>
            <person name="Haussler D."/>
            <person name="Roskin K.M."/>
            <person name="Baertsch R."/>
            <person name="Clawson H."/>
            <person name="Furey T.S."/>
            <person name="Hinrichs A.S."/>
            <person name="Karolchik D."/>
            <person name="Kent W.J."/>
            <person name="Rosenbloom K.R."/>
            <person name="Trumbower H."/>
            <person name="Weirauch M."/>
            <person name="Cooper D.N."/>
            <person name="Stenson P.D."/>
            <person name="Ma B."/>
            <person name="Brent M."/>
            <person name="Arumugam M."/>
            <person name="Shteynberg D."/>
            <person name="Copley R.R."/>
            <person name="Taylor M.S."/>
            <person name="Riethman H."/>
            <person name="Mudunuri U."/>
            <person name="Peterson J."/>
            <person name="Guyer M."/>
            <person name="Felsenfeld A."/>
            <person name="Old S."/>
            <person name="Mockrin S."/>
            <person name="Collins F.S."/>
        </authorList>
    </citation>
    <scope>NUCLEOTIDE SEQUENCE [LARGE SCALE GENOMIC DNA]</scope>
    <source>
        <strain>Brown Norway</strain>
    </source>
</reference>
<reference key="2">
    <citation type="journal article" date="2024" name="J. Biol. Chem.">
        <title>Hydroxysteroid 17-beta dehydrogenase 14 (HSD17B14) is an L-fucose dehydrogenase, the initial enzyme of the L-fucose degradation pathway.</title>
        <authorList>
            <person name="Witecka A."/>
            <person name="Kazak V."/>
            <person name="Kwiatkowski S."/>
            <person name="Kiersztan A."/>
            <person name="Jagielski A.K."/>
            <person name="Kozminski W."/>
            <person name="Augustyniak R."/>
            <person name="Drozak J."/>
        </authorList>
    </citation>
    <scope>CATALYTIC ACTIVITY</scope>
    <scope>FUNCTION</scope>
    <scope>BIOPHYSICOCHEMICAL PROPERTIES</scope>
</reference>
<proteinExistence type="evidence at protein level"/>
<comment type="function">
    <text evidence="2">Catalyzes the NAD(+)-dependent oxidation of L-fucose, yielding L-fucono-1,5-lactone, which rapidly converts spontaneously to L-fucone-1,4-lactone. Does not use NADPH (PubMed:38944119). Displays low activity on L-fucose, D-arabinose and L-galactose compared with rabbit and human (PubMed:38944119). This is consitent with the low L-fucose metabolism observed in this species (PubMed:38944119).</text>
</comment>
<comment type="catalytic activity">
    <reaction evidence="2">
        <text>L-fucose + NAD(+) = L-fucono-1,5-lactone + NADH + H(+)</text>
        <dbReference type="Rhea" id="RHEA:81515"/>
        <dbReference type="ChEBI" id="CHEBI:2181"/>
        <dbReference type="ChEBI" id="CHEBI:15378"/>
        <dbReference type="ChEBI" id="CHEBI:57540"/>
        <dbReference type="ChEBI" id="CHEBI:57945"/>
        <dbReference type="ChEBI" id="CHEBI:81457"/>
        <dbReference type="EC" id="1.1.1.122"/>
    </reaction>
    <physiologicalReaction direction="left-to-right" evidence="4">
        <dbReference type="Rhea" id="RHEA:81516"/>
    </physiologicalReaction>
</comment>
<comment type="catalytic activity">
    <reaction evidence="2">
        <text>D-arabinose + NAD(+) = D-arabinono-1,5-lactone + NADH + H(+)</text>
        <dbReference type="Rhea" id="RHEA:81519"/>
        <dbReference type="ChEBI" id="CHEBI:15378"/>
        <dbReference type="ChEBI" id="CHEBI:46994"/>
        <dbReference type="ChEBI" id="CHEBI:57540"/>
        <dbReference type="ChEBI" id="CHEBI:57945"/>
        <dbReference type="ChEBI" id="CHEBI:194242"/>
        <dbReference type="EC" id="1.1.1.122"/>
    </reaction>
    <physiologicalReaction direction="left-to-right" evidence="4">
        <dbReference type="Rhea" id="RHEA:81520"/>
    </physiologicalReaction>
</comment>
<comment type="catalytic activity">
    <reaction evidence="2">
        <text>L-galactose + NAD(+) = L-galactono-1,5-lactone + NADH + H(+)</text>
        <dbReference type="Rhea" id="RHEA:81523"/>
        <dbReference type="ChEBI" id="CHEBI:15378"/>
        <dbReference type="ChEBI" id="CHEBI:37619"/>
        <dbReference type="ChEBI" id="CHEBI:57540"/>
        <dbReference type="ChEBI" id="CHEBI:57945"/>
        <dbReference type="ChEBI" id="CHEBI:182410"/>
        <dbReference type="EC" id="1.1.1.122"/>
    </reaction>
    <physiologicalReaction direction="left-to-right" evidence="4">
        <dbReference type="Rhea" id="RHEA:81524"/>
    </physiologicalReaction>
</comment>
<comment type="biophysicochemical properties">
    <kinetics>
        <KM evidence="2">47.06 uM for NAD(+)</KM>
        <KM evidence="2">21.45 uM for L-fuctose</KM>
        <Vmax evidence="2">0.26 umol/min/mg enzyme with L-fuctose as substrate</Vmax>
        <Vmax evidence="2">0.00256 umol/min/mg enzyme with beta-estradiol as substrate</Vmax>
        <text evidence="2">kcat is 0.13 sec(-1) with L-fucose as substrate. kcat is 0.15 sec(-1) with NAD(+) as substrate.</text>
    </kinetics>
    <phDependence>
        <text evidence="2">Optimum pH is 8.5 to 10.0.</text>
    </phDependence>
</comment>
<comment type="similarity">
    <text evidence="3">Belongs to the short-chain dehydrogenases/reductases (SDR) family.</text>
</comment>
<feature type="chain" id="PRO_0000461902" description="L-fucose dehydrogenase">
    <location>
        <begin position="1"/>
        <end position="270"/>
    </location>
</feature>
<feature type="binding site" evidence="1">
    <location>
        <position position="19"/>
    </location>
    <ligand>
        <name>NAD(+)</name>
        <dbReference type="ChEBI" id="CHEBI:57540"/>
    </ligand>
</feature>
<feature type="binding site" evidence="1">
    <location>
        <position position="21"/>
    </location>
    <ligand>
        <name>NAD(+)</name>
        <dbReference type="ChEBI" id="CHEBI:57540"/>
    </ligand>
</feature>
<feature type="binding site" evidence="1">
    <location>
        <position position="40"/>
    </location>
    <ligand>
        <name>NAD(+)</name>
        <dbReference type="ChEBI" id="CHEBI:57540"/>
    </ligand>
</feature>
<feature type="binding site" evidence="1">
    <location>
        <position position="41"/>
    </location>
    <ligand>
        <name>NAD(+)</name>
        <dbReference type="ChEBI" id="CHEBI:57540"/>
    </ligand>
</feature>
<feature type="binding site" evidence="1">
    <location>
        <position position="62"/>
    </location>
    <ligand>
        <name>NAD(+)</name>
        <dbReference type="ChEBI" id="CHEBI:57540"/>
    </ligand>
</feature>
<feature type="binding site" evidence="1">
    <location>
        <position position="63"/>
    </location>
    <ligand>
        <name>NAD(+)</name>
        <dbReference type="ChEBI" id="CHEBI:57540"/>
    </ligand>
</feature>
<feature type="binding site" evidence="1">
    <location>
        <position position="89"/>
    </location>
    <ligand>
        <name>NAD(+)</name>
        <dbReference type="ChEBI" id="CHEBI:57540"/>
    </ligand>
</feature>
<feature type="binding site" evidence="1">
    <location>
        <position position="154"/>
    </location>
    <ligand>
        <name>NAD(+)</name>
        <dbReference type="ChEBI" id="CHEBI:57540"/>
    </ligand>
</feature>
<feature type="binding site" evidence="1">
    <location>
        <position position="158"/>
    </location>
    <ligand>
        <name>NAD(+)</name>
        <dbReference type="ChEBI" id="CHEBI:57540"/>
    </ligand>
</feature>
<feature type="binding site" evidence="1">
    <location>
        <position position="187"/>
    </location>
    <ligand>
        <name>NAD(+)</name>
        <dbReference type="ChEBI" id="CHEBI:57540"/>
    </ligand>
</feature>
<feature type="binding site" evidence="1">
    <location>
        <position position="189"/>
    </location>
    <ligand>
        <name>NAD(+)</name>
        <dbReference type="ChEBI" id="CHEBI:57540"/>
    </ligand>
</feature>
<feature type="binding site" evidence="1">
    <location>
        <position position="191"/>
    </location>
    <ligand>
        <name>NAD(+)</name>
        <dbReference type="ChEBI" id="CHEBI:57540"/>
    </ligand>
</feature>
<keyword id="KW-0119">Carbohydrate metabolism</keyword>
<keyword id="KW-0294">Fucose metabolism</keyword>
<keyword id="KW-0520">NAD</keyword>
<keyword id="KW-0560">Oxidoreductase</keyword>
<keyword id="KW-1185">Reference proteome</keyword>
<evidence type="ECO:0000250" key="1">
    <source>
        <dbReference type="UniProtKB" id="Q9BPX1"/>
    </source>
</evidence>
<evidence type="ECO:0000269" key="2">
    <source>
    </source>
</evidence>
<evidence type="ECO:0000305" key="3"/>
<evidence type="ECO:0000305" key="4">
    <source>
    </source>
</evidence>